<evidence type="ECO:0000255" key="1">
    <source>
        <dbReference type="HAMAP-Rule" id="MF_00728"/>
    </source>
</evidence>
<comment type="function">
    <text evidence="1">Negative regulator of FtsZ ring formation; modulates the frequency and position of FtsZ ring formation. Inhibits FtsZ ring formation at polar sites. Interacts either with FtsZ or with one of its binding partners to promote depolymerization.</text>
</comment>
<comment type="subcellular location">
    <subcellularLocation>
        <location evidence="1">Cell membrane</location>
        <topology evidence="1">Single-pass membrane protein</topology>
    </subcellularLocation>
    <text evidence="1">Colocalized with FtsZ to the nascent septal site.</text>
</comment>
<comment type="similarity">
    <text evidence="1">Belongs to the EzrA family.</text>
</comment>
<name>EZRA_BACC0</name>
<dbReference type="EMBL" id="CP001283">
    <property type="protein sequence ID" value="ACK88415.1"/>
    <property type="molecule type" value="Genomic_DNA"/>
</dbReference>
<dbReference type="RefSeq" id="WP_000377289.1">
    <property type="nucleotide sequence ID" value="NC_011773.1"/>
</dbReference>
<dbReference type="SMR" id="B7JS25"/>
<dbReference type="GeneID" id="45024522"/>
<dbReference type="KEGG" id="bcu:BCAH820_4767"/>
<dbReference type="HOGENOM" id="CLU_034079_1_0_9"/>
<dbReference type="Proteomes" id="UP000001363">
    <property type="component" value="Chromosome"/>
</dbReference>
<dbReference type="GO" id="GO:0005886">
    <property type="term" value="C:plasma membrane"/>
    <property type="evidence" value="ECO:0007669"/>
    <property type="project" value="UniProtKB-SubCell"/>
</dbReference>
<dbReference type="GO" id="GO:0005940">
    <property type="term" value="C:septin ring"/>
    <property type="evidence" value="ECO:0007669"/>
    <property type="project" value="InterPro"/>
</dbReference>
<dbReference type="GO" id="GO:0000917">
    <property type="term" value="P:division septum assembly"/>
    <property type="evidence" value="ECO:0007669"/>
    <property type="project" value="UniProtKB-KW"/>
</dbReference>
<dbReference type="GO" id="GO:0000921">
    <property type="term" value="P:septin ring assembly"/>
    <property type="evidence" value="ECO:0007669"/>
    <property type="project" value="InterPro"/>
</dbReference>
<dbReference type="HAMAP" id="MF_00728">
    <property type="entry name" value="EzrA"/>
    <property type="match status" value="1"/>
</dbReference>
<dbReference type="InterPro" id="IPR010379">
    <property type="entry name" value="EzrA"/>
</dbReference>
<dbReference type="NCBIfam" id="NF003411">
    <property type="entry name" value="PRK04778.1-5"/>
    <property type="match status" value="1"/>
</dbReference>
<dbReference type="NCBIfam" id="NF003413">
    <property type="entry name" value="PRK04778.1-7"/>
    <property type="match status" value="1"/>
</dbReference>
<dbReference type="Pfam" id="PF06160">
    <property type="entry name" value="EzrA"/>
    <property type="match status" value="1"/>
</dbReference>
<feature type="chain" id="PRO_1000132702" description="Septation ring formation regulator EzrA">
    <location>
        <begin position="1"/>
        <end position="570"/>
    </location>
</feature>
<feature type="topological domain" description="Extracellular" evidence="1">
    <location>
        <begin position="1"/>
        <end position="6"/>
    </location>
</feature>
<feature type="transmembrane region" description="Helical" evidence="1">
    <location>
        <begin position="7"/>
        <end position="25"/>
    </location>
</feature>
<feature type="topological domain" description="Cytoplasmic" evidence="1">
    <location>
        <begin position="26"/>
        <end position="570"/>
    </location>
</feature>
<feature type="coiled-coil region" evidence="1">
    <location>
        <begin position="115"/>
        <end position="149"/>
    </location>
</feature>
<feature type="coiled-coil region" evidence="1">
    <location>
        <begin position="272"/>
        <end position="304"/>
    </location>
</feature>
<feature type="coiled-coil region" evidence="1">
    <location>
        <begin position="355"/>
        <end position="429"/>
    </location>
</feature>
<accession>B7JS25</accession>
<reference key="1">
    <citation type="submission" date="2008-10" db="EMBL/GenBank/DDBJ databases">
        <title>Genome sequence of Bacillus cereus AH820.</title>
        <authorList>
            <person name="Dodson R.J."/>
            <person name="Durkin A.S."/>
            <person name="Rosovitz M.J."/>
            <person name="Rasko D.A."/>
            <person name="Hoffmaster A."/>
            <person name="Ravel J."/>
            <person name="Sutton G."/>
        </authorList>
    </citation>
    <scope>NUCLEOTIDE SEQUENCE [LARGE SCALE GENOMIC DNA]</scope>
    <source>
        <strain>AH820</strain>
    </source>
</reference>
<protein>
    <recommendedName>
        <fullName evidence="1">Septation ring formation regulator EzrA</fullName>
    </recommendedName>
</protein>
<sequence>MDSILTIVIIVVSSILVLLMIELVIRNRSYKDIEALEQWKQEIKDKPVADELKRVKDLNMTGQTEELFGKWREEWDEIVSTTIPKADKDLAQARKFASQFSFRKAKHAMNESISGLDDADNRITDILNELQQLLESHEKNSSEIEGLRDTYRSMKKSVLAHRHMYGAAEQKIEEMLDAESEKFKTFEEATNNGDYLKAREIVISLEEGLADLEIIIHQIPDLLVECQATLPVQLEDLLHGHNDMVRQGYVLDYLEVPKEVRDMTKQLQTCLIDIQELHITEAAEKVENLKTRLDGFYDQLEQEVHARHYVEQKTLSVYEDLEEIRTETIETKAETQLVKQSYQLQDKDIESQKVIEKQMHILTKRFEMLQLRVAEQDIAFSIIREELEEIYEQCETLKVLHAEYKEMLQTMRKEEFEAREKLQEMRNTIFETKRFMQKSNLPGLPESIMEDLKRGQMAMQAVYEQLEVKPLNMNAVNSSLEEAYTTVNGVAEMTEELIGQAYLVEKLIQYGNRYRSHDENLAESLNYAEKLFREYQYDAALEQAASVLEQLEPGVVQKIAEYVDNEQTLS</sequence>
<organism>
    <name type="scientific">Bacillus cereus (strain AH820)</name>
    <dbReference type="NCBI Taxonomy" id="405535"/>
    <lineage>
        <taxon>Bacteria</taxon>
        <taxon>Bacillati</taxon>
        <taxon>Bacillota</taxon>
        <taxon>Bacilli</taxon>
        <taxon>Bacillales</taxon>
        <taxon>Bacillaceae</taxon>
        <taxon>Bacillus</taxon>
        <taxon>Bacillus cereus group</taxon>
    </lineage>
</organism>
<gene>
    <name evidence="1" type="primary">ezrA</name>
    <name type="ordered locus">BCAH820_4767</name>
</gene>
<keyword id="KW-0131">Cell cycle</keyword>
<keyword id="KW-0132">Cell division</keyword>
<keyword id="KW-1003">Cell membrane</keyword>
<keyword id="KW-0175">Coiled coil</keyword>
<keyword id="KW-0472">Membrane</keyword>
<keyword id="KW-0717">Septation</keyword>
<keyword id="KW-0812">Transmembrane</keyword>
<keyword id="KW-1133">Transmembrane helix</keyword>
<proteinExistence type="inferred from homology"/>